<gene>
    <name evidence="1" type="primary">rpl18</name>
    <name type="ordered locus">LS215_1534</name>
</gene>
<accession>C3MQ78</accession>
<evidence type="ECO:0000255" key="1">
    <source>
        <dbReference type="HAMAP-Rule" id="MF_01337"/>
    </source>
</evidence>
<evidence type="ECO:0000305" key="2"/>
<proteinExistence type="inferred from homology"/>
<protein>
    <recommendedName>
        <fullName evidence="1">Large ribosomal subunit protein uL18</fullName>
    </recommendedName>
    <alternativeName>
        <fullName evidence="2">50S ribosomal protein L18</fullName>
    </alternativeName>
</protein>
<reference key="1">
    <citation type="journal article" date="2009" name="Proc. Natl. Acad. Sci. U.S.A.">
        <title>Biogeography of the Sulfolobus islandicus pan-genome.</title>
        <authorList>
            <person name="Reno M.L."/>
            <person name="Held N.L."/>
            <person name="Fields C.J."/>
            <person name="Burke P.V."/>
            <person name="Whitaker R.J."/>
        </authorList>
    </citation>
    <scope>NUCLEOTIDE SEQUENCE [LARGE SCALE GENOMIC DNA]</scope>
    <source>
        <strain>L.S.2.15 / Lassen #1</strain>
    </source>
</reference>
<name>RL18_SACI2</name>
<feature type="chain" id="PRO_1000214686" description="Large ribosomal subunit protein uL18">
    <location>
        <begin position="1"/>
        <end position="196"/>
    </location>
</feature>
<organism>
    <name type="scientific">Saccharolobus islandicus (strain L.S.2.15 / Lassen #1)</name>
    <name type="common">Sulfolobus islandicus</name>
    <dbReference type="NCBI Taxonomy" id="429572"/>
    <lineage>
        <taxon>Archaea</taxon>
        <taxon>Thermoproteota</taxon>
        <taxon>Thermoprotei</taxon>
        <taxon>Sulfolobales</taxon>
        <taxon>Sulfolobaceae</taxon>
        <taxon>Saccharolobus</taxon>
    </lineage>
</organism>
<sequence length="196" mass="22091">MANGPNYKIKPRRRREGKTNYYKRYVYVISKQIRFIVRITNKYVIVQIAKIDPKGDIMVASAHSSELTKKFEWKGDENNTPSAYLTGYLAALRAVKKGVTECVADIGLHVPSKGNKVFYAIKGAIDAGLKIPIGDISIENDRIKGEHIAKYAEKLKSENLDLYNKLFSRYLGRGLNPENLPSHFEEILNKIKSSGG</sequence>
<dbReference type="EMBL" id="CP001399">
    <property type="protein sequence ID" value="ACP35541.1"/>
    <property type="molecule type" value="Genomic_DNA"/>
</dbReference>
<dbReference type="RefSeq" id="WP_012711437.1">
    <property type="nucleotide sequence ID" value="NC_012589.1"/>
</dbReference>
<dbReference type="SMR" id="C3MQ78"/>
<dbReference type="KEGG" id="sis:LS215_1534"/>
<dbReference type="HOGENOM" id="CLU_056222_2_0_2"/>
<dbReference type="OrthoDB" id="8644at2157"/>
<dbReference type="Proteomes" id="UP000001747">
    <property type="component" value="Chromosome"/>
</dbReference>
<dbReference type="GO" id="GO:0022625">
    <property type="term" value="C:cytosolic large ribosomal subunit"/>
    <property type="evidence" value="ECO:0007669"/>
    <property type="project" value="TreeGrafter"/>
</dbReference>
<dbReference type="GO" id="GO:0008097">
    <property type="term" value="F:5S rRNA binding"/>
    <property type="evidence" value="ECO:0007669"/>
    <property type="project" value="InterPro"/>
</dbReference>
<dbReference type="GO" id="GO:0003735">
    <property type="term" value="F:structural constituent of ribosome"/>
    <property type="evidence" value="ECO:0007669"/>
    <property type="project" value="InterPro"/>
</dbReference>
<dbReference type="GO" id="GO:0000027">
    <property type="term" value="P:ribosomal large subunit assembly"/>
    <property type="evidence" value="ECO:0007669"/>
    <property type="project" value="TreeGrafter"/>
</dbReference>
<dbReference type="GO" id="GO:0006412">
    <property type="term" value="P:translation"/>
    <property type="evidence" value="ECO:0007669"/>
    <property type="project" value="UniProtKB-UniRule"/>
</dbReference>
<dbReference type="CDD" id="cd00432">
    <property type="entry name" value="Ribosomal_L18_L5e"/>
    <property type="match status" value="1"/>
</dbReference>
<dbReference type="FunFam" id="3.30.420.100:FF:000008">
    <property type="entry name" value="50S ribosomal protein L18"/>
    <property type="match status" value="1"/>
</dbReference>
<dbReference type="Gene3D" id="3.30.420.100">
    <property type="match status" value="1"/>
</dbReference>
<dbReference type="HAMAP" id="MF_01337_A">
    <property type="entry name" value="Ribosomal_uL18_A"/>
    <property type="match status" value="1"/>
</dbReference>
<dbReference type="InterPro" id="IPR005485">
    <property type="entry name" value="Rbsml_uL18_euk"/>
</dbReference>
<dbReference type="NCBIfam" id="NF006342">
    <property type="entry name" value="PRK08569.1"/>
    <property type="match status" value="1"/>
</dbReference>
<dbReference type="PANTHER" id="PTHR23410:SF12">
    <property type="entry name" value="LARGE RIBOSOMAL SUBUNIT PROTEIN UL18"/>
    <property type="match status" value="1"/>
</dbReference>
<dbReference type="PANTHER" id="PTHR23410">
    <property type="entry name" value="RIBOSOMAL PROTEIN L5-RELATED"/>
    <property type="match status" value="1"/>
</dbReference>
<dbReference type="Pfam" id="PF17144">
    <property type="entry name" value="Ribosomal_L5e"/>
    <property type="match status" value="2"/>
</dbReference>
<dbReference type="SUPFAM" id="SSF53137">
    <property type="entry name" value="Translational machinery components"/>
    <property type="match status" value="1"/>
</dbReference>
<keyword id="KW-0687">Ribonucleoprotein</keyword>
<keyword id="KW-0689">Ribosomal protein</keyword>
<keyword id="KW-0694">RNA-binding</keyword>
<keyword id="KW-0699">rRNA-binding</keyword>
<comment type="function">
    <text evidence="1">This is one of the proteins that bind and probably mediate the attachment of the 5S RNA into the large ribosomal subunit, where it forms part of the central protuberance.</text>
</comment>
<comment type="subunit">
    <text evidence="1">Part of the 50S ribosomal subunit. Contacts the 5S and 23S rRNAs.</text>
</comment>
<comment type="similarity">
    <text evidence="1">Belongs to the universal ribosomal protein uL18 family.</text>
</comment>